<gene>
    <name evidence="1" type="primary">glyS</name>
    <name type="ordered locus">Ecok1_35460</name>
    <name type="ORF">APECO1_2891</name>
</gene>
<accession>A1AHA0</accession>
<feature type="chain" id="PRO_1000006355" description="Glycine--tRNA ligase beta subunit">
    <location>
        <begin position="1"/>
        <end position="689"/>
    </location>
</feature>
<evidence type="ECO:0000255" key="1">
    <source>
        <dbReference type="HAMAP-Rule" id="MF_00255"/>
    </source>
</evidence>
<organism>
    <name type="scientific">Escherichia coli O1:K1 / APEC</name>
    <dbReference type="NCBI Taxonomy" id="405955"/>
    <lineage>
        <taxon>Bacteria</taxon>
        <taxon>Pseudomonadati</taxon>
        <taxon>Pseudomonadota</taxon>
        <taxon>Gammaproteobacteria</taxon>
        <taxon>Enterobacterales</taxon>
        <taxon>Enterobacteriaceae</taxon>
        <taxon>Escherichia</taxon>
    </lineage>
</organism>
<protein>
    <recommendedName>
        <fullName evidence="1">Glycine--tRNA ligase beta subunit</fullName>
        <ecNumber evidence="1">6.1.1.14</ecNumber>
    </recommendedName>
    <alternativeName>
        <fullName evidence="1">Glycyl-tRNA synthetase beta subunit</fullName>
        <shortName evidence="1">GlyRS</shortName>
    </alternativeName>
</protein>
<comment type="catalytic activity">
    <reaction evidence="1">
        <text>tRNA(Gly) + glycine + ATP = glycyl-tRNA(Gly) + AMP + diphosphate</text>
        <dbReference type="Rhea" id="RHEA:16013"/>
        <dbReference type="Rhea" id="RHEA-COMP:9664"/>
        <dbReference type="Rhea" id="RHEA-COMP:9683"/>
        <dbReference type="ChEBI" id="CHEBI:30616"/>
        <dbReference type="ChEBI" id="CHEBI:33019"/>
        <dbReference type="ChEBI" id="CHEBI:57305"/>
        <dbReference type="ChEBI" id="CHEBI:78442"/>
        <dbReference type="ChEBI" id="CHEBI:78522"/>
        <dbReference type="ChEBI" id="CHEBI:456215"/>
        <dbReference type="EC" id="6.1.1.14"/>
    </reaction>
</comment>
<comment type="subunit">
    <text evidence="1">Tetramer of two alpha and two beta subunits.</text>
</comment>
<comment type="subcellular location">
    <subcellularLocation>
        <location evidence="1">Cytoplasm</location>
    </subcellularLocation>
</comment>
<comment type="similarity">
    <text evidence="1">Belongs to the class-II aminoacyl-tRNA synthetase family.</text>
</comment>
<reference key="1">
    <citation type="journal article" date="2007" name="J. Bacteriol.">
        <title>The genome sequence of avian pathogenic Escherichia coli strain O1:K1:H7 shares strong similarities with human extraintestinal pathogenic E. coli genomes.</title>
        <authorList>
            <person name="Johnson T.J."/>
            <person name="Kariyawasam S."/>
            <person name="Wannemuehler Y."/>
            <person name="Mangiamele P."/>
            <person name="Johnson S.J."/>
            <person name="Doetkott C."/>
            <person name="Skyberg J.A."/>
            <person name="Lynne A.M."/>
            <person name="Johnson J.R."/>
            <person name="Nolan L.K."/>
        </authorList>
    </citation>
    <scope>NUCLEOTIDE SEQUENCE [LARGE SCALE GENOMIC DNA]</scope>
</reference>
<keyword id="KW-0030">Aminoacyl-tRNA synthetase</keyword>
<keyword id="KW-0067">ATP-binding</keyword>
<keyword id="KW-0963">Cytoplasm</keyword>
<keyword id="KW-0436">Ligase</keyword>
<keyword id="KW-0547">Nucleotide-binding</keyword>
<keyword id="KW-0648">Protein biosynthesis</keyword>
<keyword id="KW-1185">Reference proteome</keyword>
<name>SYGB_ECOK1</name>
<dbReference type="EC" id="6.1.1.14" evidence="1"/>
<dbReference type="EMBL" id="CP000468">
    <property type="protein sequence ID" value="ABJ03040.1"/>
    <property type="molecule type" value="Genomic_DNA"/>
</dbReference>
<dbReference type="RefSeq" id="WP_001291788.1">
    <property type="nucleotide sequence ID" value="NZ_CADILS010000015.1"/>
</dbReference>
<dbReference type="SMR" id="A1AHA0"/>
<dbReference type="GeneID" id="75173758"/>
<dbReference type="KEGG" id="ecv:APECO1_2891"/>
<dbReference type="HOGENOM" id="CLU_007220_2_2_6"/>
<dbReference type="Proteomes" id="UP000008216">
    <property type="component" value="Chromosome"/>
</dbReference>
<dbReference type="GO" id="GO:0005829">
    <property type="term" value="C:cytosol"/>
    <property type="evidence" value="ECO:0007669"/>
    <property type="project" value="TreeGrafter"/>
</dbReference>
<dbReference type="GO" id="GO:0004814">
    <property type="term" value="F:arginine-tRNA ligase activity"/>
    <property type="evidence" value="ECO:0007669"/>
    <property type="project" value="InterPro"/>
</dbReference>
<dbReference type="GO" id="GO:0005524">
    <property type="term" value="F:ATP binding"/>
    <property type="evidence" value="ECO:0007669"/>
    <property type="project" value="UniProtKB-UniRule"/>
</dbReference>
<dbReference type="GO" id="GO:0004820">
    <property type="term" value="F:glycine-tRNA ligase activity"/>
    <property type="evidence" value="ECO:0007669"/>
    <property type="project" value="UniProtKB-UniRule"/>
</dbReference>
<dbReference type="GO" id="GO:0006420">
    <property type="term" value="P:arginyl-tRNA aminoacylation"/>
    <property type="evidence" value="ECO:0007669"/>
    <property type="project" value="InterPro"/>
</dbReference>
<dbReference type="GO" id="GO:0006426">
    <property type="term" value="P:glycyl-tRNA aminoacylation"/>
    <property type="evidence" value="ECO:0007669"/>
    <property type="project" value="UniProtKB-UniRule"/>
</dbReference>
<dbReference type="HAMAP" id="MF_00255">
    <property type="entry name" value="Gly_tRNA_synth_beta"/>
    <property type="match status" value="1"/>
</dbReference>
<dbReference type="InterPro" id="IPR008909">
    <property type="entry name" value="DALR_anticod-bd"/>
</dbReference>
<dbReference type="InterPro" id="IPR015944">
    <property type="entry name" value="Gly-tRNA-synth_bsu"/>
</dbReference>
<dbReference type="InterPro" id="IPR006194">
    <property type="entry name" value="Gly-tRNA-synth_heterodimer"/>
</dbReference>
<dbReference type="NCBIfam" id="TIGR00211">
    <property type="entry name" value="glyS"/>
    <property type="match status" value="1"/>
</dbReference>
<dbReference type="PANTHER" id="PTHR30075:SF2">
    <property type="entry name" value="GLYCINE--TRNA LIGASE, CHLOROPLASTIC_MITOCHONDRIAL 2"/>
    <property type="match status" value="1"/>
</dbReference>
<dbReference type="PANTHER" id="PTHR30075">
    <property type="entry name" value="GLYCYL-TRNA SYNTHETASE"/>
    <property type="match status" value="1"/>
</dbReference>
<dbReference type="Pfam" id="PF05746">
    <property type="entry name" value="DALR_1"/>
    <property type="match status" value="1"/>
</dbReference>
<dbReference type="Pfam" id="PF02092">
    <property type="entry name" value="tRNA_synt_2f"/>
    <property type="match status" value="1"/>
</dbReference>
<dbReference type="PRINTS" id="PR01045">
    <property type="entry name" value="TRNASYNTHGB"/>
</dbReference>
<dbReference type="SUPFAM" id="SSF109604">
    <property type="entry name" value="HD-domain/PDEase-like"/>
    <property type="match status" value="1"/>
</dbReference>
<dbReference type="PROSITE" id="PS50861">
    <property type="entry name" value="AA_TRNA_LIGASE_II_GLYAB"/>
    <property type="match status" value="1"/>
</dbReference>
<proteinExistence type="inferred from homology"/>
<sequence length="689" mass="76813">MSEKTFLVEIGTEELPPKALRSLAESFAANFTAELDNAGLAHGTVQWFAAPRRLALKVANLAEAQPDREIEKRGPAIAQAFDAEGKPSKAAEGWARGCGITVDQAERLTTDKGEWLLYRAHVKGESTEALLPNMVATSLAKLPIPKLMRWGASDVHFVRPVHTVTLLLGDKVIPATILGIQSDRVIRGHRFMGEPEFTIDNADQYPEILRERGKVIADYEERKAKIKADAEEAARKIGGNADLSESLLEEVASLVEWPVVLTAKFEEKFLAVPSEALVYTMKGDQKYFPVYANDGKLLPNFIFVANIESKDPQQIISGNEKVVRPRLADAEFFFNTDRKKRLEDNLPRLQTVLFQQQLGTLRDKTDRIQALAGWIAEQIGADVNHATRAGLLSKCDLMTNMVFEFTDTQGVMGMHYARHDGEAEDVAVALNEQYQPRFAGDDLPSNPVACALAIADKMDTLAGIFGIGQHPKGDKDPFALRRAALGVLRIIVEKNLNLDLQTLTEEAVRLYGDKLTNANVVDDVIDFMLGRFRAWYQDEGYTVDTIQAVLARRPTRPADFDARMKAVSHFRTLEAAAALAAANKRVSNILAKSDEVLSDRVNASTLKEPEEIKLAMQVVVLRDKLEPYFAEGRYQDALVELAELREPVDAFFDKVMVMVDDKELRINRLTMLEKLRELFLRVADISLLQ</sequence>